<comment type="function">
    <text evidence="1">The RuvA-RuvB-RuvC complex processes Holliday junction (HJ) DNA during genetic recombination and DNA repair. Endonuclease that resolves HJ intermediates. Cleaves cruciform DNA by making single-stranded nicks across the HJ at symmetrical positions within the homologous arms, yielding a 5'-phosphate and a 3'-hydroxyl group; requires a central core of homology in the junction. The consensus cleavage sequence is 5'-(A/T)TT(C/G)-3'. Cleavage occurs on the 3'-side of the TT dinucleotide at the point of strand exchange. HJ branch migration catalyzed by RuvA-RuvB allows RuvC to scan DNA until it finds its consensus sequence, where it cleaves and resolves the cruciform DNA.</text>
</comment>
<comment type="catalytic activity">
    <reaction evidence="1">
        <text>Endonucleolytic cleavage at a junction such as a reciprocal single-stranded crossover between two homologous DNA duplexes (Holliday junction).</text>
        <dbReference type="EC" id="3.1.21.10"/>
    </reaction>
</comment>
<comment type="cofactor">
    <cofactor evidence="1">
        <name>Mg(2+)</name>
        <dbReference type="ChEBI" id="CHEBI:18420"/>
    </cofactor>
    <text evidence="1">Binds 2 Mg(2+) ion per subunit.</text>
</comment>
<comment type="subunit">
    <text evidence="1">Homodimer which binds Holliday junction (HJ) DNA. The HJ becomes 2-fold symmetrical on binding to RuvC with unstacked arms; it has a different conformation from HJ DNA in complex with RuvA. In the full resolvosome a probable DNA-RuvA(4)-RuvB(12)-RuvC(2) complex forms which resolves the HJ.</text>
</comment>
<comment type="subcellular location">
    <subcellularLocation>
        <location evidence="1">Cytoplasm</location>
    </subcellularLocation>
</comment>
<comment type="similarity">
    <text evidence="1">Belongs to the RuvC family.</text>
</comment>
<name>RUVC_CHLPM</name>
<accession>A4SG33</accession>
<gene>
    <name evidence="1" type="primary">ruvC</name>
    <name type="ordered locus">Cvib_1431</name>
</gene>
<organism>
    <name type="scientific">Chlorobium phaeovibrioides (strain DSM 265 / 1930)</name>
    <name type="common">Prosthecochloris vibrioformis (strain DSM 265)</name>
    <dbReference type="NCBI Taxonomy" id="290318"/>
    <lineage>
        <taxon>Bacteria</taxon>
        <taxon>Pseudomonadati</taxon>
        <taxon>Chlorobiota</taxon>
        <taxon>Chlorobiia</taxon>
        <taxon>Chlorobiales</taxon>
        <taxon>Chlorobiaceae</taxon>
        <taxon>Chlorobium/Pelodictyon group</taxon>
        <taxon>Chlorobium</taxon>
    </lineage>
</organism>
<sequence length="189" mass="19895">MVVLGIDPGSLATGYGVVSGDGRESFRALSCGLIRLHPRKSHAVRVGEIYRELSELIGELKPDRVAIETAFVGKNVQSALKLGQVRGAIMALSFNSGVPIFEYAPREVKSAVTGRGGAAKEQVAFMVASMLSLSSVPKPFDVTDALGVALCDLLRCGGGQKERQTDMKGSGGGLCGWGDFVRASPDRVL</sequence>
<evidence type="ECO:0000255" key="1">
    <source>
        <dbReference type="HAMAP-Rule" id="MF_00034"/>
    </source>
</evidence>
<reference key="1">
    <citation type="submission" date="2007-03" db="EMBL/GenBank/DDBJ databases">
        <title>Complete sequence of Prosthecochloris vibrioformis DSM 265.</title>
        <authorList>
            <consortium name="US DOE Joint Genome Institute"/>
            <person name="Copeland A."/>
            <person name="Lucas S."/>
            <person name="Lapidus A."/>
            <person name="Barry K."/>
            <person name="Detter J.C."/>
            <person name="Glavina del Rio T."/>
            <person name="Hammon N."/>
            <person name="Israni S."/>
            <person name="Pitluck S."/>
            <person name="Schmutz J."/>
            <person name="Larimer F."/>
            <person name="Land M."/>
            <person name="Hauser L."/>
            <person name="Mikhailova N."/>
            <person name="Li T."/>
            <person name="Overmann J."/>
            <person name="Schuster S.C."/>
            <person name="Bryant D.A."/>
            <person name="Richardson P."/>
        </authorList>
    </citation>
    <scope>NUCLEOTIDE SEQUENCE [LARGE SCALE GENOMIC DNA]</scope>
    <source>
        <strain>DSM 265 / 1930</strain>
    </source>
</reference>
<proteinExistence type="inferred from homology"/>
<feature type="chain" id="PRO_1000074493" description="Crossover junction endodeoxyribonuclease RuvC">
    <location>
        <begin position="1"/>
        <end position="189"/>
    </location>
</feature>
<feature type="active site" evidence="1">
    <location>
        <position position="7"/>
    </location>
</feature>
<feature type="active site" evidence="1">
    <location>
        <position position="68"/>
    </location>
</feature>
<feature type="active site" evidence="1">
    <location>
        <position position="141"/>
    </location>
</feature>
<feature type="binding site" evidence="1">
    <location>
        <position position="7"/>
    </location>
    <ligand>
        <name>Mg(2+)</name>
        <dbReference type="ChEBI" id="CHEBI:18420"/>
        <label>1</label>
    </ligand>
</feature>
<feature type="binding site" evidence="1">
    <location>
        <position position="68"/>
    </location>
    <ligand>
        <name>Mg(2+)</name>
        <dbReference type="ChEBI" id="CHEBI:18420"/>
        <label>2</label>
    </ligand>
</feature>
<feature type="binding site" evidence="1">
    <location>
        <position position="141"/>
    </location>
    <ligand>
        <name>Mg(2+)</name>
        <dbReference type="ChEBI" id="CHEBI:18420"/>
        <label>1</label>
    </ligand>
</feature>
<dbReference type="EC" id="3.1.21.10" evidence="1"/>
<dbReference type="EMBL" id="CP000607">
    <property type="protein sequence ID" value="ABP37442.1"/>
    <property type="molecule type" value="Genomic_DNA"/>
</dbReference>
<dbReference type="SMR" id="A4SG33"/>
<dbReference type="STRING" id="290318.Cvib_1431"/>
<dbReference type="KEGG" id="pvi:Cvib_1431"/>
<dbReference type="eggNOG" id="COG0817">
    <property type="taxonomic scope" value="Bacteria"/>
</dbReference>
<dbReference type="HOGENOM" id="CLU_091257_3_0_10"/>
<dbReference type="OrthoDB" id="9805499at2"/>
<dbReference type="GO" id="GO:0005737">
    <property type="term" value="C:cytoplasm"/>
    <property type="evidence" value="ECO:0007669"/>
    <property type="project" value="UniProtKB-SubCell"/>
</dbReference>
<dbReference type="GO" id="GO:0048476">
    <property type="term" value="C:Holliday junction resolvase complex"/>
    <property type="evidence" value="ECO:0007669"/>
    <property type="project" value="UniProtKB-UniRule"/>
</dbReference>
<dbReference type="GO" id="GO:0008821">
    <property type="term" value="F:crossover junction DNA endonuclease activity"/>
    <property type="evidence" value="ECO:0007669"/>
    <property type="project" value="UniProtKB-UniRule"/>
</dbReference>
<dbReference type="GO" id="GO:0003677">
    <property type="term" value="F:DNA binding"/>
    <property type="evidence" value="ECO:0007669"/>
    <property type="project" value="UniProtKB-KW"/>
</dbReference>
<dbReference type="GO" id="GO:0000287">
    <property type="term" value="F:magnesium ion binding"/>
    <property type="evidence" value="ECO:0007669"/>
    <property type="project" value="UniProtKB-UniRule"/>
</dbReference>
<dbReference type="GO" id="GO:0006310">
    <property type="term" value="P:DNA recombination"/>
    <property type="evidence" value="ECO:0007669"/>
    <property type="project" value="UniProtKB-UniRule"/>
</dbReference>
<dbReference type="GO" id="GO:0006281">
    <property type="term" value="P:DNA repair"/>
    <property type="evidence" value="ECO:0007669"/>
    <property type="project" value="UniProtKB-UniRule"/>
</dbReference>
<dbReference type="CDD" id="cd16962">
    <property type="entry name" value="RuvC"/>
    <property type="match status" value="1"/>
</dbReference>
<dbReference type="FunFam" id="3.30.420.10:FF:000002">
    <property type="entry name" value="Crossover junction endodeoxyribonuclease RuvC"/>
    <property type="match status" value="1"/>
</dbReference>
<dbReference type="Gene3D" id="3.30.420.10">
    <property type="entry name" value="Ribonuclease H-like superfamily/Ribonuclease H"/>
    <property type="match status" value="1"/>
</dbReference>
<dbReference type="HAMAP" id="MF_00034">
    <property type="entry name" value="RuvC"/>
    <property type="match status" value="1"/>
</dbReference>
<dbReference type="InterPro" id="IPR012337">
    <property type="entry name" value="RNaseH-like_sf"/>
</dbReference>
<dbReference type="InterPro" id="IPR036397">
    <property type="entry name" value="RNaseH_sf"/>
</dbReference>
<dbReference type="InterPro" id="IPR020563">
    <property type="entry name" value="X-over_junc_endoDNase_Mg_BS"/>
</dbReference>
<dbReference type="InterPro" id="IPR002176">
    <property type="entry name" value="X-over_junc_endoDNase_RuvC"/>
</dbReference>
<dbReference type="NCBIfam" id="TIGR00228">
    <property type="entry name" value="ruvC"/>
    <property type="match status" value="1"/>
</dbReference>
<dbReference type="PANTHER" id="PTHR30194">
    <property type="entry name" value="CROSSOVER JUNCTION ENDODEOXYRIBONUCLEASE RUVC"/>
    <property type="match status" value="1"/>
</dbReference>
<dbReference type="PANTHER" id="PTHR30194:SF3">
    <property type="entry name" value="CROSSOVER JUNCTION ENDODEOXYRIBONUCLEASE RUVC"/>
    <property type="match status" value="1"/>
</dbReference>
<dbReference type="Pfam" id="PF02075">
    <property type="entry name" value="RuvC"/>
    <property type="match status" value="1"/>
</dbReference>
<dbReference type="PRINTS" id="PR00696">
    <property type="entry name" value="RSOLVASERUVC"/>
</dbReference>
<dbReference type="SUPFAM" id="SSF53098">
    <property type="entry name" value="Ribonuclease H-like"/>
    <property type="match status" value="1"/>
</dbReference>
<dbReference type="PROSITE" id="PS01321">
    <property type="entry name" value="RUVC"/>
    <property type="match status" value="1"/>
</dbReference>
<keyword id="KW-0963">Cytoplasm</keyword>
<keyword id="KW-0227">DNA damage</keyword>
<keyword id="KW-0233">DNA recombination</keyword>
<keyword id="KW-0234">DNA repair</keyword>
<keyword id="KW-0238">DNA-binding</keyword>
<keyword id="KW-0255">Endonuclease</keyword>
<keyword id="KW-0378">Hydrolase</keyword>
<keyword id="KW-0460">Magnesium</keyword>
<keyword id="KW-0479">Metal-binding</keyword>
<keyword id="KW-0540">Nuclease</keyword>
<protein>
    <recommendedName>
        <fullName evidence="1">Crossover junction endodeoxyribonuclease RuvC</fullName>
        <ecNumber evidence="1">3.1.21.10</ecNumber>
    </recommendedName>
    <alternativeName>
        <fullName evidence="1">Holliday junction nuclease RuvC</fullName>
    </alternativeName>
    <alternativeName>
        <fullName evidence="1">Holliday junction resolvase RuvC</fullName>
    </alternativeName>
</protein>